<name>GLO2_ECOBW</name>
<proteinExistence type="inferred from homology"/>
<feature type="chain" id="PRO_1000215083" description="Hydroxyacylglutathione hydrolase">
    <location>
        <begin position="1"/>
        <end position="251"/>
    </location>
</feature>
<feature type="binding site" evidence="1">
    <location>
        <position position="53"/>
    </location>
    <ligand>
        <name>Zn(2+)</name>
        <dbReference type="ChEBI" id="CHEBI:29105"/>
        <label>1</label>
    </ligand>
</feature>
<feature type="binding site" evidence="1">
    <location>
        <position position="55"/>
    </location>
    <ligand>
        <name>Zn(2+)</name>
        <dbReference type="ChEBI" id="CHEBI:29105"/>
        <label>1</label>
    </ligand>
</feature>
<feature type="binding site" evidence="1">
    <location>
        <position position="57"/>
    </location>
    <ligand>
        <name>Zn(2+)</name>
        <dbReference type="ChEBI" id="CHEBI:29105"/>
        <label>2</label>
    </ligand>
</feature>
<feature type="binding site" evidence="1">
    <location>
        <position position="58"/>
    </location>
    <ligand>
        <name>Zn(2+)</name>
        <dbReference type="ChEBI" id="CHEBI:29105"/>
        <label>2</label>
    </ligand>
</feature>
<feature type="binding site" evidence="1">
    <location>
        <position position="110"/>
    </location>
    <ligand>
        <name>Zn(2+)</name>
        <dbReference type="ChEBI" id="CHEBI:29105"/>
        <label>1</label>
    </ligand>
</feature>
<feature type="binding site" evidence="1">
    <location>
        <position position="127"/>
    </location>
    <ligand>
        <name>Zn(2+)</name>
        <dbReference type="ChEBI" id="CHEBI:29105"/>
        <label>1</label>
    </ligand>
</feature>
<feature type="binding site" evidence="1">
    <location>
        <position position="127"/>
    </location>
    <ligand>
        <name>Zn(2+)</name>
        <dbReference type="ChEBI" id="CHEBI:29105"/>
        <label>2</label>
    </ligand>
</feature>
<feature type="binding site" evidence="1">
    <location>
        <position position="165"/>
    </location>
    <ligand>
        <name>Zn(2+)</name>
        <dbReference type="ChEBI" id="CHEBI:29105"/>
        <label>2</label>
    </ligand>
</feature>
<comment type="function">
    <text evidence="1">Thiolesterase that catalyzes the hydrolysis of S-D-lactoyl-glutathione to form glutathione and D-lactic acid.</text>
</comment>
<comment type="catalytic activity">
    <reaction evidence="1">
        <text>an S-(2-hydroxyacyl)glutathione + H2O = a 2-hydroxy carboxylate + glutathione + H(+)</text>
        <dbReference type="Rhea" id="RHEA:21864"/>
        <dbReference type="ChEBI" id="CHEBI:15377"/>
        <dbReference type="ChEBI" id="CHEBI:15378"/>
        <dbReference type="ChEBI" id="CHEBI:57925"/>
        <dbReference type="ChEBI" id="CHEBI:58896"/>
        <dbReference type="ChEBI" id="CHEBI:71261"/>
        <dbReference type="EC" id="3.1.2.6"/>
    </reaction>
</comment>
<comment type="cofactor">
    <cofactor evidence="1">
        <name>Zn(2+)</name>
        <dbReference type="ChEBI" id="CHEBI:29105"/>
    </cofactor>
    <text evidence="1">Binds 2 Zn(2+) ions per subunit.</text>
</comment>
<comment type="pathway">
    <text evidence="1">Secondary metabolite metabolism; methylglyoxal degradation; (R)-lactate from methylglyoxal: step 2/2.</text>
</comment>
<comment type="subunit">
    <text evidence="1">Monomer.</text>
</comment>
<comment type="similarity">
    <text evidence="1">Belongs to the metallo-beta-lactamase superfamily. Glyoxalase II family.</text>
</comment>
<dbReference type="EC" id="3.1.2.6" evidence="1"/>
<dbReference type="EMBL" id="CP001396">
    <property type="protein sequence ID" value="ACR64488.1"/>
    <property type="molecule type" value="Genomic_DNA"/>
</dbReference>
<dbReference type="RefSeq" id="WP_001052715.1">
    <property type="nucleotide sequence ID" value="NC_012759.1"/>
</dbReference>
<dbReference type="SMR" id="C4ZRU9"/>
<dbReference type="KEGG" id="ebw:BWG_0199"/>
<dbReference type="HOGENOM" id="CLU_030571_4_1_6"/>
<dbReference type="UniPathway" id="UPA00619">
    <property type="reaction ID" value="UER00676"/>
</dbReference>
<dbReference type="GO" id="GO:0004416">
    <property type="term" value="F:hydroxyacylglutathione hydrolase activity"/>
    <property type="evidence" value="ECO:0007669"/>
    <property type="project" value="UniProtKB-UniRule"/>
</dbReference>
<dbReference type="GO" id="GO:0046872">
    <property type="term" value="F:metal ion binding"/>
    <property type="evidence" value="ECO:0007669"/>
    <property type="project" value="UniProtKB-KW"/>
</dbReference>
<dbReference type="GO" id="GO:0019243">
    <property type="term" value="P:methylglyoxal catabolic process to D-lactate via S-lactoyl-glutathione"/>
    <property type="evidence" value="ECO:0007669"/>
    <property type="project" value="InterPro"/>
</dbReference>
<dbReference type="CDD" id="cd07723">
    <property type="entry name" value="hydroxyacylglutathione_hydrolase_MBL-fold"/>
    <property type="match status" value="1"/>
</dbReference>
<dbReference type="FunFam" id="3.60.15.10:FF:000012">
    <property type="entry name" value="Hydroxyacylglutathione hydrolase"/>
    <property type="match status" value="1"/>
</dbReference>
<dbReference type="Gene3D" id="3.60.15.10">
    <property type="entry name" value="Ribonuclease Z/Hydroxyacylglutathione hydrolase-like"/>
    <property type="match status" value="1"/>
</dbReference>
<dbReference type="HAMAP" id="MF_01374">
    <property type="entry name" value="Glyoxalase_2"/>
    <property type="match status" value="1"/>
</dbReference>
<dbReference type="InterPro" id="IPR035680">
    <property type="entry name" value="Clx_II_MBL"/>
</dbReference>
<dbReference type="InterPro" id="IPR050110">
    <property type="entry name" value="Glyoxalase_II_hydrolase"/>
</dbReference>
<dbReference type="InterPro" id="IPR032282">
    <property type="entry name" value="HAGH_C"/>
</dbReference>
<dbReference type="InterPro" id="IPR017782">
    <property type="entry name" value="Hydroxyacylglutathione_Hdrlase"/>
</dbReference>
<dbReference type="InterPro" id="IPR001279">
    <property type="entry name" value="Metallo-B-lactamas"/>
</dbReference>
<dbReference type="InterPro" id="IPR036866">
    <property type="entry name" value="RibonucZ/Hydroxyglut_hydro"/>
</dbReference>
<dbReference type="NCBIfam" id="TIGR03413">
    <property type="entry name" value="GSH_gloB"/>
    <property type="match status" value="1"/>
</dbReference>
<dbReference type="NCBIfam" id="NF007597">
    <property type="entry name" value="PRK10241.1"/>
    <property type="match status" value="1"/>
</dbReference>
<dbReference type="PANTHER" id="PTHR43705">
    <property type="entry name" value="HYDROXYACYLGLUTATHIONE HYDROLASE"/>
    <property type="match status" value="1"/>
</dbReference>
<dbReference type="PANTHER" id="PTHR43705:SF1">
    <property type="entry name" value="HYDROXYACYLGLUTATHIONE HYDROLASE GLOB"/>
    <property type="match status" value="1"/>
</dbReference>
<dbReference type="Pfam" id="PF16123">
    <property type="entry name" value="HAGH_C"/>
    <property type="match status" value="1"/>
</dbReference>
<dbReference type="Pfam" id="PF00753">
    <property type="entry name" value="Lactamase_B"/>
    <property type="match status" value="1"/>
</dbReference>
<dbReference type="PIRSF" id="PIRSF005457">
    <property type="entry name" value="Glx"/>
    <property type="match status" value="1"/>
</dbReference>
<dbReference type="SMART" id="SM00849">
    <property type="entry name" value="Lactamase_B"/>
    <property type="match status" value="1"/>
</dbReference>
<dbReference type="SUPFAM" id="SSF56281">
    <property type="entry name" value="Metallo-hydrolase/oxidoreductase"/>
    <property type="match status" value="1"/>
</dbReference>
<protein>
    <recommendedName>
        <fullName evidence="1">Hydroxyacylglutathione hydrolase</fullName>
        <ecNumber evidence="1">3.1.2.6</ecNumber>
    </recommendedName>
    <alternativeName>
        <fullName evidence="1">Glyoxalase II</fullName>
        <shortName evidence="1">Glx II</shortName>
    </alternativeName>
</protein>
<organism>
    <name type="scientific">Escherichia coli (strain K12 / MC4100 / BW2952)</name>
    <dbReference type="NCBI Taxonomy" id="595496"/>
    <lineage>
        <taxon>Bacteria</taxon>
        <taxon>Pseudomonadati</taxon>
        <taxon>Pseudomonadota</taxon>
        <taxon>Gammaproteobacteria</taxon>
        <taxon>Enterobacterales</taxon>
        <taxon>Enterobacteriaceae</taxon>
        <taxon>Escherichia</taxon>
    </lineage>
</organism>
<gene>
    <name evidence="1" type="primary">gloB</name>
    <name type="ordered locus">BWG_0199</name>
</gene>
<accession>C4ZRU9</accession>
<evidence type="ECO:0000255" key="1">
    <source>
        <dbReference type="HAMAP-Rule" id="MF_01374"/>
    </source>
</evidence>
<reference key="1">
    <citation type="journal article" date="2009" name="J. Bacteriol.">
        <title>Genomic sequencing reveals regulatory mutations and recombinational events in the widely used MC4100 lineage of Escherichia coli K-12.</title>
        <authorList>
            <person name="Ferenci T."/>
            <person name="Zhou Z."/>
            <person name="Betteridge T."/>
            <person name="Ren Y."/>
            <person name="Liu Y."/>
            <person name="Feng L."/>
            <person name="Reeves P.R."/>
            <person name="Wang L."/>
        </authorList>
    </citation>
    <scope>NUCLEOTIDE SEQUENCE [LARGE SCALE GENOMIC DNA]</scope>
    <source>
        <strain>K12 / MC4100 / BW2952</strain>
    </source>
</reference>
<keyword id="KW-0378">Hydrolase</keyword>
<keyword id="KW-0479">Metal-binding</keyword>
<keyword id="KW-0862">Zinc</keyword>
<sequence>MNLNSIPAFDDNYIWVLNDEAGRCLIVDPGDAEPVLNAIAANNWQPEAIFLTHHHHDHVGGVKELVEKFPQIVVYGPQETQDKGTTQVVKDGETAFVLGHEFSVIATPGHTLGHICYFSKPYLFCGDTLFSGGCGRLFEGTASQMYQSLKKLSALPDDTLVCCAHEYTLSNMKFALSILPHDLSINDYYRKVKELRAKNQITLPVILKNERQINVFLRTEDIDLINVINEETLLQQPEERFAWLRSKKDRF</sequence>